<gene>
    <name evidence="1" type="primary">pepT</name>
    <name type="ordered locus">SSPA1508</name>
</gene>
<reference key="1">
    <citation type="journal article" date="2009" name="BMC Genomics">
        <title>Pseudogene accumulation in the evolutionary histories of Salmonella enterica serovars Paratyphi A and Typhi.</title>
        <authorList>
            <person name="Holt K.E."/>
            <person name="Thomson N.R."/>
            <person name="Wain J."/>
            <person name="Langridge G.C."/>
            <person name="Hasan R."/>
            <person name="Bhutta Z.A."/>
            <person name="Quail M.A."/>
            <person name="Norbertczak H."/>
            <person name="Walker D."/>
            <person name="Simmonds M."/>
            <person name="White B."/>
            <person name="Bason N."/>
            <person name="Mungall K."/>
            <person name="Dougan G."/>
            <person name="Parkhill J."/>
        </authorList>
    </citation>
    <scope>NUCLEOTIDE SEQUENCE [LARGE SCALE GENOMIC DNA]</scope>
    <source>
        <strain>AKU_12601</strain>
    </source>
</reference>
<feature type="chain" id="PRO_1000129044" description="Peptidase T">
    <location>
        <begin position="1"/>
        <end position="409"/>
    </location>
</feature>
<feature type="active site" evidence="1">
    <location>
        <position position="80"/>
    </location>
</feature>
<feature type="active site" description="Proton acceptor" evidence="1">
    <location>
        <position position="173"/>
    </location>
</feature>
<feature type="binding site" evidence="1">
    <location>
        <position position="78"/>
    </location>
    <ligand>
        <name>Zn(2+)</name>
        <dbReference type="ChEBI" id="CHEBI:29105"/>
        <label>1</label>
    </ligand>
</feature>
<feature type="binding site" evidence="1">
    <location>
        <position position="140"/>
    </location>
    <ligand>
        <name>Zn(2+)</name>
        <dbReference type="ChEBI" id="CHEBI:29105"/>
        <label>1</label>
    </ligand>
</feature>
<feature type="binding site" evidence="1">
    <location>
        <position position="140"/>
    </location>
    <ligand>
        <name>Zn(2+)</name>
        <dbReference type="ChEBI" id="CHEBI:29105"/>
        <label>2</label>
    </ligand>
</feature>
<feature type="binding site" evidence="1">
    <location>
        <position position="174"/>
    </location>
    <ligand>
        <name>Zn(2+)</name>
        <dbReference type="ChEBI" id="CHEBI:29105"/>
        <label>2</label>
    </ligand>
</feature>
<feature type="binding site" evidence="1">
    <location>
        <position position="196"/>
    </location>
    <ligand>
        <name>Zn(2+)</name>
        <dbReference type="ChEBI" id="CHEBI:29105"/>
        <label>1</label>
    </ligand>
</feature>
<feature type="binding site" evidence="1">
    <location>
        <position position="379"/>
    </location>
    <ligand>
        <name>Zn(2+)</name>
        <dbReference type="ChEBI" id="CHEBI:29105"/>
        <label>2</label>
    </ligand>
</feature>
<proteinExistence type="inferred from homology"/>
<organism>
    <name type="scientific">Salmonella paratyphi A (strain AKU_12601)</name>
    <dbReference type="NCBI Taxonomy" id="554290"/>
    <lineage>
        <taxon>Bacteria</taxon>
        <taxon>Pseudomonadati</taxon>
        <taxon>Pseudomonadota</taxon>
        <taxon>Gammaproteobacteria</taxon>
        <taxon>Enterobacterales</taxon>
        <taxon>Enterobacteriaceae</taxon>
        <taxon>Salmonella</taxon>
    </lineage>
</organism>
<name>PEPT_SALPK</name>
<protein>
    <recommendedName>
        <fullName evidence="1">Peptidase T</fullName>
        <ecNumber evidence="1">3.4.11.4</ecNumber>
    </recommendedName>
    <alternativeName>
        <fullName evidence="1">Aminotripeptidase</fullName>
        <shortName evidence="1">Tripeptidase</shortName>
    </alternativeName>
    <alternativeName>
        <fullName evidence="1">Tripeptide aminopeptidase</fullName>
    </alternativeName>
</protein>
<comment type="function">
    <text evidence="1">Cleaves the N-terminal amino acid of tripeptides.</text>
</comment>
<comment type="catalytic activity">
    <reaction evidence="1">
        <text>Release of the N-terminal residue from a tripeptide.</text>
        <dbReference type="EC" id="3.4.11.4"/>
    </reaction>
</comment>
<comment type="cofactor">
    <cofactor evidence="1">
        <name>Zn(2+)</name>
        <dbReference type="ChEBI" id="CHEBI:29105"/>
    </cofactor>
    <text evidence="1">Binds 2 Zn(2+) ions per subunit.</text>
</comment>
<comment type="subcellular location">
    <subcellularLocation>
        <location evidence="1">Cytoplasm</location>
    </subcellularLocation>
</comment>
<comment type="similarity">
    <text evidence="1">Belongs to the peptidase M20B family.</text>
</comment>
<evidence type="ECO:0000255" key="1">
    <source>
        <dbReference type="HAMAP-Rule" id="MF_00550"/>
    </source>
</evidence>
<sequence>MDKLLERFLHYVSLDTQSKSGVRQVPSTEGQWKLLRLLKQQLEEMGLVNITLSEKGTLMATLPANVEGDIPAIGFISHVDTSPDFSGKNVNPQIVENYRGGDIALGIGDEVLSPVMFPVLHQLLGQTLITTDGKTLLGADDKAGVAEIMTALAVLKGNPIPHGEIKVAFTPDEEVGKGAKHFDVEEFGAQWAYTVDGGGVGELEFENFNAASVNIKIVGNNVHPGTAKGVMVNALSLAARIHAEVPADEAPETTEGYEGFYHLASMKGTVDRAEMHYIIRDFDRKQFEARKRKMMEIAKKVGKGLHPDCYIELVIEDSYYNMREKVVEHPHILDIAQQAMRDCHITPEMKPIRGGTDGAQLSFMGLPCPNLFTGGYNYHGKHEFVTLEGMEKAVQVIVRIAELTAKRGQ</sequence>
<dbReference type="EC" id="3.4.11.4" evidence="1"/>
<dbReference type="EMBL" id="FM200053">
    <property type="protein sequence ID" value="CAR59691.1"/>
    <property type="molecule type" value="Genomic_DNA"/>
</dbReference>
<dbReference type="RefSeq" id="WP_000359418.1">
    <property type="nucleotide sequence ID" value="NC_011147.1"/>
</dbReference>
<dbReference type="SMR" id="B5BAE8"/>
<dbReference type="MEROPS" id="M20.003"/>
<dbReference type="KEGG" id="sek:SSPA1508"/>
<dbReference type="HOGENOM" id="CLU_053676_0_0_6"/>
<dbReference type="Proteomes" id="UP000001869">
    <property type="component" value="Chromosome"/>
</dbReference>
<dbReference type="GO" id="GO:0005829">
    <property type="term" value="C:cytosol"/>
    <property type="evidence" value="ECO:0007669"/>
    <property type="project" value="TreeGrafter"/>
</dbReference>
<dbReference type="GO" id="GO:0008237">
    <property type="term" value="F:metallopeptidase activity"/>
    <property type="evidence" value="ECO:0007669"/>
    <property type="project" value="UniProtKB-KW"/>
</dbReference>
<dbReference type="GO" id="GO:0045148">
    <property type="term" value="F:tripeptide aminopeptidase activity"/>
    <property type="evidence" value="ECO:0007669"/>
    <property type="project" value="UniProtKB-UniRule"/>
</dbReference>
<dbReference type="GO" id="GO:0008270">
    <property type="term" value="F:zinc ion binding"/>
    <property type="evidence" value="ECO:0007669"/>
    <property type="project" value="UniProtKB-UniRule"/>
</dbReference>
<dbReference type="GO" id="GO:0043171">
    <property type="term" value="P:peptide catabolic process"/>
    <property type="evidence" value="ECO:0007669"/>
    <property type="project" value="UniProtKB-UniRule"/>
</dbReference>
<dbReference type="GO" id="GO:0006508">
    <property type="term" value="P:proteolysis"/>
    <property type="evidence" value="ECO:0007669"/>
    <property type="project" value="UniProtKB-UniRule"/>
</dbReference>
<dbReference type="CDD" id="cd03892">
    <property type="entry name" value="M20_peptT"/>
    <property type="match status" value="1"/>
</dbReference>
<dbReference type="FunFam" id="3.30.70.360:FF:000002">
    <property type="entry name" value="Peptidase T"/>
    <property type="match status" value="1"/>
</dbReference>
<dbReference type="Gene3D" id="3.30.70.360">
    <property type="match status" value="1"/>
</dbReference>
<dbReference type="Gene3D" id="3.40.630.10">
    <property type="entry name" value="Zn peptidases"/>
    <property type="match status" value="1"/>
</dbReference>
<dbReference type="HAMAP" id="MF_00550">
    <property type="entry name" value="Aminopeptidase_M20"/>
    <property type="match status" value="1"/>
</dbReference>
<dbReference type="InterPro" id="IPR001261">
    <property type="entry name" value="ArgE/DapE_CS"/>
</dbReference>
<dbReference type="InterPro" id="IPR036264">
    <property type="entry name" value="Bact_exopeptidase_dim_dom"/>
</dbReference>
<dbReference type="InterPro" id="IPR002933">
    <property type="entry name" value="Peptidase_M20"/>
</dbReference>
<dbReference type="InterPro" id="IPR011650">
    <property type="entry name" value="Peptidase_M20_dimer"/>
</dbReference>
<dbReference type="InterPro" id="IPR010161">
    <property type="entry name" value="Peptidase_M20B"/>
</dbReference>
<dbReference type="NCBIfam" id="TIGR01882">
    <property type="entry name" value="peptidase-T"/>
    <property type="match status" value="1"/>
</dbReference>
<dbReference type="NCBIfam" id="NF003976">
    <property type="entry name" value="PRK05469.1"/>
    <property type="match status" value="1"/>
</dbReference>
<dbReference type="NCBIfam" id="NF009920">
    <property type="entry name" value="PRK13381.1"/>
    <property type="match status" value="1"/>
</dbReference>
<dbReference type="PANTHER" id="PTHR42994">
    <property type="entry name" value="PEPTIDASE T"/>
    <property type="match status" value="1"/>
</dbReference>
<dbReference type="PANTHER" id="PTHR42994:SF1">
    <property type="entry name" value="PEPTIDASE T"/>
    <property type="match status" value="1"/>
</dbReference>
<dbReference type="Pfam" id="PF07687">
    <property type="entry name" value="M20_dimer"/>
    <property type="match status" value="1"/>
</dbReference>
<dbReference type="Pfam" id="PF01546">
    <property type="entry name" value="Peptidase_M20"/>
    <property type="match status" value="1"/>
</dbReference>
<dbReference type="PIRSF" id="PIRSF037215">
    <property type="entry name" value="Peptidase_M20B"/>
    <property type="match status" value="1"/>
</dbReference>
<dbReference type="SUPFAM" id="SSF55031">
    <property type="entry name" value="Bacterial exopeptidase dimerisation domain"/>
    <property type="match status" value="1"/>
</dbReference>
<dbReference type="SUPFAM" id="SSF53187">
    <property type="entry name" value="Zn-dependent exopeptidases"/>
    <property type="match status" value="1"/>
</dbReference>
<dbReference type="PROSITE" id="PS00758">
    <property type="entry name" value="ARGE_DAPE_CPG2_1"/>
    <property type="match status" value="1"/>
</dbReference>
<dbReference type="PROSITE" id="PS00759">
    <property type="entry name" value="ARGE_DAPE_CPG2_2"/>
    <property type="match status" value="1"/>
</dbReference>
<keyword id="KW-0031">Aminopeptidase</keyword>
<keyword id="KW-0963">Cytoplasm</keyword>
<keyword id="KW-0378">Hydrolase</keyword>
<keyword id="KW-0479">Metal-binding</keyword>
<keyword id="KW-0482">Metalloprotease</keyword>
<keyword id="KW-0645">Protease</keyword>
<keyword id="KW-0862">Zinc</keyword>
<accession>B5BAE8</accession>